<organism>
    <name type="scientific">Caldicellulosiruptor saccharolyticus (strain ATCC 43494 / DSM 8903 / Tp8T 6331)</name>
    <dbReference type="NCBI Taxonomy" id="351627"/>
    <lineage>
        <taxon>Bacteria</taxon>
        <taxon>Bacillati</taxon>
        <taxon>Bacillota</taxon>
        <taxon>Bacillota incertae sedis</taxon>
        <taxon>Caldicellulosiruptorales</taxon>
        <taxon>Caldicellulosiruptoraceae</taxon>
        <taxon>Caldicellulosiruptor</taxon>
    </lineage>
</organism>
<sequence>MSRIGKKPIDIPSGVEVKIDGNVITVKGPKGSLTKEIHPEMIVKIENNQILVQRPSDERHHKALHGLTRTLIANMVAGVTKGYEKVLEIVGIGYRAQKQGKKLILNVGYSHPVEIEEPAGITIEVPDQNRIVVKGIDKQQVGNFAANIRKVREPDPYLGKGIKYADEVLRLKEGKAGKGGKK</sequence>
<feature type="chain" id="PRO_1000055210" description="Large ribosomal subunit protein uL6">
    <location>
        <begin position="1"/>
        <end position="182"/>
    </location>
</feature>
<name>RL6_CALS8</name>
<accession>A4XLR5</accession>
<reference key="1">
    <citation type="submission" date="2007-04" db="EMBL/GenBank/DDBJ databases">
        <title>Genome sequence of the thermophilic hydrogen-producing bacterium Caldicellulosiruptor saccharolyticus DSM 8903.</title>
        <authorList>
            <person name="Copeland A."/>
            <person name="Lucas S."/>
            <person name="Lapidus A."/>
            <person name="Barry K."/>
            <person name="Detter J.C."/>
            <person name="Glavina del Rio T."/>
            <person name="Hammon N."/>
            <person name="Israni S."/>
            <person name="Dalin E."/>
            <person name="Tice H."/>
            <person name="Pitluck S."/>
            <person name="Kiss H."/>
            <person name="Brettin T."/>
            <person name="Bruce D."/>
            <person name="Han C."/>
            <person name="Schmutz J."/>
            <person name="Larimer F."/>
            <person name="Land M."/>
            <person name="Hauser L."/>
            <person name="Kyrpides N."/>
            <person name="Lykidis A."/>
            <person name="van de Werken H.J.G."/>
            <person name="Verhaart M.R.A."/>
            <person name="VanFossen A.L."/>
            <person name="Lewis D.L."/>
            <person name="Nichols J.D."/>
            <person name="Goorissen H.P."/>
            <person name="van Niel E.W.J."/>
            <person name="Stams F.J.M."/>
            <person name="Willquist K.U."/>
            <person name="Ward D.E."/>
            <person name="van der Oost J."/>
            <person name="Kelly R.M."/>
            <person name="Kengen S.M.W."/>
            <person name="Richardson P."/>
        </authorList>
    </citation>
    <scope>NUCLEOTIDE SEQUENCE [LARGE SCALE GENOMIC DNA]</scope>
    <source>
        <strain>ATCC 43494 / DSM 8903 / Tp8T 6331</strain>
    </source>
</reference>
<keyword id="KW-0687">Ribonucleoprotein</keyword>
<keyword id="KW-0689">Ribosomal protein</keyword>
<keyword id="KW-0694">RNA-binding</keyword>
<keyword id="KW-0699">rRNA-binding</keyword>
<protein>
    <recommendedName>
        <fullName evidence="1">Large ribosomal subunit protein uL6</fullName>
    </recommendedName>
    <alternativeName>
        <fullName evidence="2">50S ribosomal protein L6</fullName>
    </alternativeName>
</protein>
<dbReference type="EMBL" id="CP000679">
    <property type="protein sequence ID" value="ABP67850.1"/>
    <property type="molecule type" value="Genomic_DNA"/>
</dbReference>
<dbReference type="RefSeq" id="WP_011917776.1">
    <property type="nucleotide sequence ID" value="NC_009437.1"/>
</dbReference>
<dbReference type="SMR" id="A4XLR5"/>
<dbReference type="STRING" id="351627.Csac_2272"/>
<dbReference type="KEGG" id="csc:Csac_2272"/>
<dbReference type="eggNOG" id="COG0097">
    <property type="taxonomic scope" value="Bacteria"/>
</dbReference>
<dbReference type="HOGENOM" id="CLU_065464_1_2_9"/>
<dbReference type="OrthoDB" id="9805007at2"/>
<dbReference type="Proteomes" id="UP000000256">
    <property type="component" value="Chromosome"/>
</dbReference>
<dbReference type="GO" id="GO:0022625">
    <property type="term" value="C:cytosolic large ribosomal subunit"/>
    <property type="evidence" value="ECO:0007669"/>
    <property type="project" value="TreeGrafter"/>
</dbReference>
<dbReference type="GO" id="GO:0019843">
    <property type="term" value="F:rRNA binding"/>
    <property type="evidence" value="ECO:0007669"/>
    <property type="project" value="UniProtKB-UniRule"/>
</dbReference>
<dbReference type="GO" id="GO:0003735">
    <property type="term" value="F:structural constituent of ribosome"/>
    <property type="evidence" value="ECO:0007669"/>
    <property type="project" value="InterPro"/>
</dbReference>
<dbReference type="GO" id="GO:0002181">
    <property type="term" value="P:cytoplasmic translation"/>
    <property type="evidence" value="ECO:0007669"/>
    <property type="project" value="TreeGrafter"/>
</dbReference>
<dbReference type="FunFam" id="3.90.930.12:FF:000001">
    <property type="entry name" value="50S ribosomal protein L6"/>
    <property type="match status" value="1"/>
</dbReference>
<dbReference type="FunFam" id="3.90.930.12:FF:000002">
    <property type="entry name" value="50S ribosomal protein L6"/>
    <property type="match status" value="1"/>
</dbReference>
<dbReference type="Gene3D" id="3.90.930.12">
    <property type="entry name" value="Ribosomal protein L6, alpha-beta domain"/>
    <property type="match status" value="2"/>
</dbReference>
<dbReference type="HAMAP" id="MF_01365_B">
    <property type="entry name" value="Ribosomal_uL6_B"/>
    <property type="match status" value="1"/>
</dbReference>
<dbReference type="InterPro" id="IPR000702">
    <property type="entry name" value="Ribosomal_uL6-like"/>
</dbReference>
<dbReference type="InterPro" id="IPR036789">
    <property type="entry name" value="Ribosomal_uL6-like_a/b-dom_sf"/>
</dbReference>
<dbReference type="InterPro" id="IPR020040">
    <property type="entry name" value="Ribosomal_uL6_a/b-dom"/>
</dbReference>
<dbReference type="InterPro" id="IPR019906">
    <property type="entry name" value="Ribosomal_uL6_bac-type"/>
</dbReference>
<dbReference type="NCBIfam" id="TIGR03654">
    <property type="entry name" value="L6_bact"/>
    <property type="match status" value="1"/>
</dbReference>
<dbReference type="PANTHER" id="PTHR11655">
    <property type="entry name" value="60S/50S RIBOSOMAL PROTEIN L6/L9"/>
    <property type="match status" value="1"/>
</dbReference>
<dbReference type="PANTHER" id="PTHR11655:SF14">
    <property type="entry name" value="LARGE RIBOSOMAL SUBUNIT PROTEIN UL6M"/>
    <property type="match status" value="1"/>
</dbReference>
<dbReference type="Pfam" id="PF00347">
    <property type="entry name" value="Ribosomal_L6"/>
    <property type="match status" value="2"/>
</dbReference>
<dbReference type="PIRSF" id="PIRSF002162">
    <property type="entry name" value="Ribosomal_L6"/>
    <property type="match status" value="1"/>
</dbReference>
<dbReference type="PRINTS" id="PR00059">
    <property type="entry name" value="RIBOSOMALL6"/>
</dbReference>
<dbReference type="SUPFAM" id="SSF56053">
    <property type="entry name" value="Ribosomal protein L6"/>
    <property type="match status" value="2"/>
</dbReference>
<evidence type="ECO:0000255" key="1">
    <source>
        <dbReference type="HAMAP-Rule" id="MF_01365"/>
    </source>
</evidence>
<evidence type="ECO:0000305" key="2"/>
<comment type="function">
    <text evidence="1">This protein binds to the 23S rRNA, and is important in its secondary structure. It is located near the subunit interface in the base of the L7/L12 stalk, and near the tRNA binding site of the peptidyltransferase center.</text>
</comment>
<comment type="subunit">
    <text evidence="1">Part of the 50S ribosomal subunit.</text>
</comment>
<comment type="similarity">
    <text evidence="1">Belongs to the universal ribosomal protein uL6 family.</text>
</comment>
<gene>
    <name evidence="1" type="primary">rplF</name>
    <name type="ordered locus">Csac_2272</name>
</gene>
<proteinExistence type="inferred from homology"/>